<organism>
    <name type="scientific">Arianta arbustorum</name>
    <name type="common">Land snail</name>
    <dbReference type="NCBI Taxonomy" id="45985"/>
    <lineage>
        <taxon>Eukaryota</taxon>
        <taxon>Metazoa</taxon>
        <taxon>Spiralia</taxon>
        <taxon>Lophotrochozoa</taxon>
        <taxon>Mollusca</taxon>
        <taxon>Gastropoda</taxon>
        <taxon>Heterobranchia</taxon>
        <taxon>Euthyneura</taxon>
        <taxon>Panpulmonata</taxon>
        <taxon>Eupulmonata</taxon>
        <taxon>Stylommatophora</taxon>
        <taxon>Helicina</taxon>
        <taxon>Helicoidea</taxon>
        <taxon>Helicidae</taxon>
        <taxon>Arianta</taxon>
    </lineage>
</organism>
<proteinExistence type="evidence at protein level"/>
<evidence type="ECO:0000250" key="1">
    <source>
        <dbReference type="UniProtKB" id="P33187"/>
    </source>
</evidence>
<evidence type="ECO:0000269" key="2">
    <source>
    </source>
</evidence>
<evidence type="ECO:0000305" key="3"/>
<feature type="chain" id="PRO_0000197335" description="Metallothionein">
    <location>
        <begin position="1"/>
        <end position="66"/>
    </location>
</feature>
<feature type="binding site" evidence="1">
    <location>
        <position position="9"/>
    </location>
    <ligand>
        <name>Cd(2+)</name>
        <dbReference type="ChEBI" id="CHEBI:48775"/>
        <label>1</label>
    </ligand>
</feature>
<feature type="binding site" evidence="1">
    <location>
        <position position="13"/>
    </location>
    <ligand>
        <name>Cd(2+)</name>
        <dbReference type="ChEBI" id="CHEBI:48775"/>
        <label>1</label>
    </ligand>
</feature>
<feature type="binding site" evidence="1">
    <location>
        <position position="13"/>
    </location>
    <ligand>
        <name>Cd(2+)</name>
        <dbReference type="ChEBI" id="CHEBI:48775"/>
        <label>2</label>
    </ligand>
</feature>
<feature type="binding site" evidence="1">
    <location>
        <position position="18"/>
    </location>
    <ligand>
        <name>Cd(2+)</name>
        <dbReference type="ChEBI" id="CHEBI:48775"/>
        <label>2</label>
    </ligand>
</feature>
<feature type="binding site" evidence="1">
    <location>
        <position position="20"/>
    </location>
    <ligand>
        <name>Cd(2+)</name>
        <dbReference type="ChEBI" id="CHEBI:48775"/>
        <label>3</label>
    </ligand>
</feature>
<feature type="binding site" evidence="1">
    <location>
        <position position="24"/>
    </location>
    <ligand>
        <name>Cd(2+)</name>
        <dbReference type="ChEBI" id="CHEBI:48775"/>
        <label>3</label>
    </ligand>
</feature>
<feature type="binding site" evidence="1">
    <location>
        <position position="26"/>
    </location>
    <ligand>
        <name>Cd(2+)</name>
        <dbReference type="ChEBI" id="CHEBI:48775"/>
        <label>1</label>
    </ligand>
</feature>
<feature type="binding site" evidence="1">
    <location>
        <position position="26"/>
    </location>
    <ligand>
        <name>Cd(2+)</name>
        <dbReference type="ChEBI" id="CHEBI:48775"/>
        <label>3</label>
    </ligand>
</feature>
<feature type="binding site" evidence="1">
    <location>
        <position position="30"/>
    </location>
    <ligand>
        <name>Cd(2+)</name>
        <dbReference type="ChEBI" id="CHEBI:48775"/>
        <label>1</label>
    </ligand>
</feature>
<feature type="binding site" evidence="1">
    <location>
        <position position="32"/>
    </location>
    <ligand>
        <name>Cd(2+)</name>
        <dbReference type="ChEBI" id="CHEBI:48775"/>
        <label>2</label>
    </ligand>
</feature>
<feature type="binding site" evidence="1">
    <location>
        <position position="35"/>
    </location>
    <ligand>
        <name>Cd(2+)</name>
        <dbReference type="ChEBI" id="CHEBI:48775"/>
        <label>2</label>
    </ligand>
</feature>
<feature type="binding site" evidence="1">
    <location>
        <position position="35"/>
    </location>
    <ligand>
        <name>Cd(2+)</name>
        <dbReference type="ChEBI" id="CHEBI:48775"/>
        <label>3</label>
    </ligand>
</feature>
<feature type="binding site" evidence="1">
    <location>
        <position position="38"/>
    </location>
    <ligand>
        <name>Cd(2+)</name>
        <dbReference type="ChEBI" id="CHEBI:48775"/>
        <label>4</label>
    </ligand>
</feature>
<feature type="binding site" evidence="1">
    <location>
        <position position="40"/>
    </location>
    <ligand>
        <name>Cd(2+)</name>
        <dbReference type="ChEBI" id="CHEBI:48775"/>
        <label>5</label>
    </ligand>
</feature>
<feature type="binding site" evidence="1">
    <location>
        <position position="45"/>
    </location>
    <ligand>
        <name>Cd(2+)</name>
        <dbReference type="ChEBI" id="CHEBI:48775"/>
        <label>5</label>
    </ligand>
</feature>
<feature type="binding site" evidence="1">
    <location>
        <position position="47"/>
    </location>
    <ligand>
        <name>Cd(2+)</name>
        <dbReference type="ChEBI" id="CHEBI:48775"/>
        <label>5</label>
    </ligand>
</feature>
<feature type="binding site" evidence="1">
    <location>
        <position position="47"/>
    </location>
    <ligand>
        <name>Cd(2+)</name>
        <dbReference type="ChEBI" id="CHEBI:48775"/>
        <label>6</label>
    </ligand>
</feature>
<feature type="binding site" evidence="1">
    <location>
        <position position="51"/>
    </location>
    <ligand>
        <name>Cd(2+)</name>
        <dbReference type="ChEBI" id="CHEBI:48775"/>
        <label>4</label>
    </ligand>
</feature>
<feature type="binding site" evidence="1">
    <location>
        <position position="51"/>
    </location>
    <ligand>
        <name>Cd(2+)</name>
        <dbReference type="ChEBI" id="CHEBI:48775"/>
        <label>5</label>
    </ligand>
</feature>
<feature type="binding site" evidence="1">
    <location>
        <position position="57"/>
    </location>
    <ligand>
        <name>Cd(2+)</name>
        <dbReference type="ChEBI" id="CHEBI:48775"/>
        <label>4</label>
    </ligand>
</feature>
<feature type="binding site" evidence="1">
    <location>
        <position position="59"/>
    </location>
    <ligand>
        <name>Cd(2+)</name>
        <dbReference type="ChEBI" id="CHEBI:48775"/>
        <label>6</label>
    </ligand>
</feature>
<feature type="binding site" evidence="1">
    <location>
        <position position="63"/>
    </location>
    <ligand>
        <name>Cd(2+)</name>
        <dbReference type="ChEBI" id="CHEBI:48775"/>
        <label>6</label>
    </ligand>
</feature>
<feature type="binding site" evidence="1">
    <location>
        <position position="65"/>
    </location>
    <ligand>
        <name>Cd(2+)</name>
        <dbReference type="ChEBI" id="CHEBI:48775"/>
        <label>4</label>
    </ligand>
</feature>
<feature type="binding site" evidence="1">
    <location>
        <position position="65"/>
    </location>
    <ligand>
        <name>Cd(2+)</name>
        <dbReference type="ChEBI" id="CHEBI:48775"/>
        <label>6</label>
    </ligand>
</feature>
<feature type="modified residue" description="N-acetylserine" evidence="2">
    <location>
        <position position="1"/>
    </location>
</feature>
<feature type="sequence variant" description="In MTB." evidence="2">
    <original>N</original>
    <variation>G</variation>
    <location>
        <position position="60"/>
    </location>
</feature>
<dbReference type="PIR" id="S59621">
    <property type="entry name" value="S59621"/>
</dbReference>
<dbReference type="PIR" id="S59622">
    <property type="entry name" value="S59622"/>
</dbReference>
<dbReference type="SMR" id="P55946"/>
<dbReference type="iPTMnet" id="P55946"/>
<dbReference type="GO" id="GO:0046872">
    <property type="term" value="F:metal ion binding"/>
    <property type="evidence" value="ECO:0007669"/>
    <property type="project" value="UniProtKB-KW"/>
</dbReference>
<dbReference type="InterPro" id="IPR001008">
    <property type="entry name" value="Metalthion_mollusc"/>
</dbReference>
<dbReference type="PRINTS" id="PR00875">
    <property type="entry name" value="MTMOLLUSC"/>
</dbReference>
<accession>P55946</accession>
<sequence length="66" mass="6495">SGKGKGDLCTAACKNEPCQCGSKCQCGEGCACASCKTCNCTSDGCKCGKECTGAASCKCNSSCSCK</sequence>
<name>MT_ARIAR</name>
<comment type="function">
    <text>The metallothioneins are involved in the cellular sequestration of toxic metal ions and regulation of essential trace elements.</text>
</comment>
<comment type="induction">
    <text>By cadmium.</text>
</comment>
<comment type="domain">
    <text>14 cysteine residues are arranged in C-X-C groups. These are thought to be the metal-binding sites in other metallothioneins.</text>
</comment>
<comment type="polymorphism">
    <text evidence="2">The sequence shown is that of variant A (MTA); variant B (MTB) differs in a single position.</text>
</comment>
<comment type="similarity">
    <text evidence="3">Belongs to the metallothionein superfamily. Type 2 family.</text>
</comment>
<keyword id="KW-0007">Acetylation</keyword>
<keyword id="KW-0104">Cadmium</keyword>
<keyword id="KW-0903">Direct protein sequencing</keyword>
<keyword id="KW-0479">Metal-binding</keyword>
<keyword id="KW-0480">Metal-thiolate cluster</keyword>
<reference key="1">
    <citation type="journal article" date="1995" name="Biochem. J.">
        <title>Mass spectrometry and amino acid sequencing of two cadmium-binding metallothionein isoforms from the terrestrial gastropod Arianta arbustorum.</title>
        <authorList>
            <person name="Berger B."/>
            <person name="Hunziker P.E."/>
            <person name="Hauer C.R."/>
            <person name="Birchler N."/>
            <person name="Dallinger R."/>
        </authorList>
    </citation>
    <scope>PROTEIN SEQUENCE</scope>
    <scope>ACETYLATION AT SER-1</scope>
    <scope>POLYMORPHISM</scope>
</reference>
<protein>
    <recommendedName>
        <fullName>Metallothionein</fullName>
        <shortName>MT</shortName>
    </recommendedName>
</protein>